<name>HEMH_SULSY</name>
<dbReference type="EC" id="4.98.1.1" evidence="1"/>
<dbReference type="EMBL" id="CP001080">
    <property type="protein sequence ID" value="ACD66478.1"/>
    <property type="molecule type" value="Genomic_DNA"/>
</dbReference>
<dbReference type="RefSeq" id="WP_012459552.1">
    <property type="nucleotide sequence ID" value="NC_010730.1"/>
</dbReference>
<dbReference type="SMR" id="B2V955"/>
<dbReference type="STRING" id="436114.SYO3AOP1_0845"/>
<dbReference type="KEGG" id="sul:SYO3AOP1_0845"/>
<dbReference type="eggNOG" id="COG0276">
    <property type="taxonomic scope" value="Bacteria"/>
</dbReference>
<dbReference type="HOGENOM" id="CLU_018884_4_1_0"/>
<dbReference type="UniPathway" id="UPA00252">
    <property type="reaction ID" value="UER00325"/>
</dbReference>
<dbReference type="GO" id="GO:0005737">
    <property type="term" value="C:cytoplasm"/>
    <property type="evidence" value="ECO:0007669"/>
    <property type="project" value="UniProtKB-SubCell"/>
</dbReference>
<dbReference type="GO" id="GO:0004325">
    <property type="term" value="F:ferrochelatase activity"/>
    <property type="evidence" value="ECO:0007669"/>
    <property type="project" value="UniProtKB-UniRule"/>
</dbReference>
<dbReference type="GO" id="GO:0046872">
    <property type="term" value="F:metal ion binding"/>
    <property type="evidence" value="ECO:0007669"/>
    <property type="project" value="UniProtKB-KW"/>
</dbReference>
<dbReference type="GO" id="GO:0006783">
    <property type="term" value="P:heme biosynthetic process"/>
    <property type="evidence" value="ECO:0007669"/>
    <property type="project" value="UniProtKB-UniRule"/>
</dbReference>
<dbReference type="CDD" id="cd00419">
    <property type="entry name" value="Ferrochelatase_C"/>
    <property type="match status" value="1"/>
</dbReference>
<dbReference type="CDD" id="cd03411">
    <property type="entry name" value="Ferrochelatase_N"/>
    <property type="match status" value="1"/>
</dbReference>
<dbReference type="FunFam" id="3.40.50.1400:FF:000006">
    <property type="entry name" value="Ferrochelatase"/>
    <property type="match status" value="1"/>
</dbReference>
<dbReference type="Gene3D" id="3.40.50.1400">
    <property type="match status" value="2"/>
</dbReference>
<dbReference type="HAMAP" id="MF_00323">
    <property type="entry name" value="Ferrochelatase"/>
    <property type="match status" value="1"/>
</dbReference>
<dbReference type="InterPro" id="IPR001015">
    <property type="entry name" value="Ferrochelatase"/>
</dbReference>
<dbReference type="InterPro" id="IPR019772">
    <property type="entry name" value="Ferrochelatase_AS"/>
</dbReference>
<dbReference type="InterPro" id="IPR033644">
    <property type="entry name" value="Ferrochelatase_C"/>
</dbReference>
<dbReference type="InterPro" id="IPR033659">
    <property type="entry name" value="Ferrochelatase_N"/>
</dbReference>
<dbReference type="NCBIfam" id="TIGR00109">
    <property type="entry name" value="hemH"/>
    <property type="match status" value="1"/>
</dbReference>
<dbReference type="PANTHER" id="PTHR11108">
    <property type="entry name" value="FERROCHELATASE"/>
    <property type="match status" value="1"/>
</dbReference>
<dbReference type="PANTHER" id="PTHR11108:SF1">
    <property type="entry name" value="FERROCHELATASE, MITOCHONDRIAL"/>
    <property type="match status" value="1"/>
</dbReference>
<dbReference type="Pfam" id="PF00762">
    <property type="entry name" value="Ferrochelatase"/>
    <property type="match status" value="1"/>
</dbReference>
<dbReference type="SUPFAM" id="SSF53800">
    <property type="entry name" value="Chelatase"/>
    <property type="match status" value="1"/>
</dbReference>
<dbReference type="PROSITE" id="PS00534">
    <property type="entry name" value="FERROCHELATASE"/>
    <property type="match status" value="1"/>
</dbReference>
<sequence>MTKEKIGVVLLNMGGPDSLDAIQPFLYNLFSDHDIIQIPKPIQKPVAFLISRLRAKKTKKYYEIMGGKSPQKEQTLQQAQKLQEKLEEDYKVVVAMRYWHPFTEEALNQLFQEKIKKIILLPLYPQYSRTTTGSSFNEFDRRVKRYINPGKFAVLSTLKGTKDPYYYFSNIPIAKINCYFDNPLYIKAMVENIKENLPEDYKDYYFLFTAHSLPEKIILDGDPYKKQTETTVKLIMEHFPNVKYSLAYQSKVGPVKWLEPFTDQEIERLIKEGYKKLIVIPVSFVSEHSETLYELDYLYGNIAKELGAESYIRIPTLKSHPMFIETLKELVIKNS</sequence>
<accession>B2V955</accession>
<organism>
    <name type="scientific">Sulfurihydrogenibium sp. (strain YO3AOP1)</name>
    <dbReference type="NCBI Taxonomy" id="436114"/>
    <lineage>
        <taxon>Bacteria</taxon>
        <taxon>Pseudomonadati</taxon>
        <taxon>Aquificota</taxon>
        <taxon>Aquificia</taxon>
        <taxon>Aquificales</taxon>
        <taxon>Hydrogenothermaceae</taxon>
        <taxon>Sulfurihydrogenibium</taxon>
    </lineage>
</organism>
<keyword id="KW-0963">Cytoplasm</keyword>
<keyword id="KW-0350">Heme biosynthesis</keyword>
<keyword id="KW-0408">Iron</keyword>
<keyword id="KW-0456">Lyase</keyword>
<keyword id="KW-0479">Metal-binding</keyword>
<keyword id="KW-0627">Porphyrin biosynthesis</keyword>
<reference key="1">
    <citation type="journal article" date="2009" name="J. Bacteriol.">
        <title>Complete and draft genome sequences of six members of the Aquificales.</title>
        <authorList>
            <person name="Reysenbach A.-L."/>
            <person name="Hamamura N."/>
            <person name="Podar M."/>
            <person name="Griffiths E."/>
            <person name="Ferreira S."/>
            <person name="Hochstein R."/>
            <person name="Heidelberg J."/>
            <person name="Johnson J."/>
            <person name="Mead D."/>
            <person name="Pohorille A."/>
            <person name="Sarmiento M."/>
            <person name="Schweighofer K."/>
            <person name="Seshadri R."/>
            <person name="Voytek M.A."/>
        </authorList>
    </citation>
    <scope>NUCLEOTIDE SEQUENCE [LARGE SCALE GENOMIC DNA]</scope>
    <source>
        <strain>YO3AOP1</strain>
    </source>
</reference>
<feature type="chain" id="PRO_1000116086" description="Ferrochelatase">
    <location>
        <begin position="1"/>
        <end position="335"/>
    </location>
</feature>
<feature type="binding site" evidence="1">
    <location>
        <position position="211"/>
    </location>
    <ligand>
        <name>Fe cation</name>
        <dbReference type="ChEBI" id="CHEBI:24875"/>
    </ligand>
</feature>
<feature type="binding site" evidence="1">
    <location>
        <position position="290"/>
    </location>
    <ligand>
        <name>Fe cation</name>
        <dbReference type="ChEBI" id="CHEBI:24875"/>
    </ligand>
</feature>
<evidence type="ECO:0000255" key="1">
    <source>
        <dbReference type="HAMAP-Rule" id="MF_00323"/>
    </source>
</evidence>
<protein>
    <recommendedName>
        <fullName evidence="1">Ferrochelatase</fullName>
        <ecNumber evidence="1">4.98.1.1</ecNumber>
    </recommendedName>
    <alternativeName>
        <fullName evidence="1">Heme synthase</fullName>
    </alternativeName>
    <alternativeName>
        <fullName evidence="1">Protoheme ferro-lyase</fullName>
    </alternativeName>
</protein>
<proteinExistence type="inferred from homology"/>
<comment type="function">
    <text evidence="1">Catalyzes the ferrous insertion into protoporphyrin IX.</text>
</comment>
<comment type="catalytic activity">
    <reaction evidence="1">
        <text>heme b + 2 H(+) = protoporphyrin IX + Fe(2+)</text>
        <dbReference type="Rhea" id="RHEA:22584"/>
        <dbReference type="ChEBI" id="CHEBI:15378"/>
        <dbReference type="ChEBI" id="CHEBI:29033"/>
        <dbReference type="ChEBI" id="CHEBI:57306"/>
        <dbReference type="ChEBI" id="CHEBI:60344"/>
        <dbReference type="EC" id="4.98.1.1"/>
    </reaction>
</comment>
<comment type="pathway">
    <text evidence="1">Porphyrin-containing compound metabolism; protoheme biosynthesis; protoheme from protoporphyrin-IX: step 1/1.</text>
</comment>
<comment type="subcellular location">
    <subcellularLocation>
        <location evidence="1">Cytoplasm</location>
    </subcellularLocation>
</comment>
<comment type="similarity">
    <text evidence="1">Belongs to the ferrochelatase family.</text>
</comment>
<gene>
    <name evidence="1" type="primary">hemH</name>
    <name type="ordered locus">SYO3AOP1_0845</name>
</gene>